<feature type="chain" id="PRO_1000147841" description="Mlc titration factor A">
    <location>
        <begin position="1"/>
        <end position="265"/>
    </location>
</feature>
<feature type="binding site" evidence="1">
    <location>
        <position position="111"/>
    </location>
    <ligand>
        <name>Zn(2+)</name>
        <dbReference type="ChEBI" id="CHEBI:29105"/>
    </ligand>
</feature>
<feature type="binding site" evidence="1">
    <location>
        <position position="148"/>
    </location>
    <ligand>
        <name>Zn(2+)</name>
        <dbReference type="ChEBI" id="CHEBI:29105"/>
    </ligand>
</feature>
<feature type="binding site" evidence="1">
    <location>
        <position position="152"/>
    </location>
    <ligand>
        <name>Zn(2+)</name>
        <dbReference type="ChEBI" id="CHEBI:29105"/>
    </ligand>
</feature>
<feature type="binding site" evidence="1">
    <location>
        <position position="211"/>
    </location>
    <ligand>
        <name>Zn(2+)</name>
        <dbReference type="ChEBI" id="CHEBI:29105"/>
    </ligand>
</feature>
<accession>B5XPU4</accession>
<proteinExistence type="inferred from homology"/>
<protein>
    <recommendedName>
        <fullName evidence="1">Mlc titration factor A</fullName>
    </recommendedName>
    <alternativeName>
        <fullName evidence="1">Probable zinc metallopeptidase MtfA</fullName>
        <ecNumber evidence="1">3.4.11.-</ecNumber>
    </alternativeName>
</protein>
<dbReference type="EC" id="3.4.11.-" evidence="1"/>
<dbReference type="EMBL" id="CP000964">
    <property type="protein sequence ID" value="ACI06809.1"/>
    <property type="molecule type" value="Genomic_DNA"/>
</dbReference>
<dbReference type="SMR" id="B5XPU4"/>
<dbReference type="MEROPS" id="M90.001"/>
<dbReference type="KEGG" id="kpe:KPK_1844"/>
<dbReference type="HOGENOM" id="CLU_063037_2_0_6"/>
<dbReference type="Proteomes" id="UP000001734">
    <property type="component" value="Chromosome"/>
</dbReference>
<dbReference type="GO" id="GO:0005829">
    <property type="term" value="C:cytosol"/>
    <property type="evidence" value="ECO:0007669"/>
    <property type="project" value="TreeGrafter"/>
</dbReference>
<dbReference type="GO" id="GO:0004177">
    <property type="term" value="F:aminopeptidase activity"/>
    <property type="evidence" value="ECO:0007669"/>
    <property type="project" value="UniProtKB-UniRule"/>
</dbReference>
<dbReference type="GO" id="GO:0008237">
    <property type="term" value="F:metallopeptidase activity"/>
    <property type="evidence" value="ECO:0007669"/>
    <property type="project" value="UniProtKB-UniRule"/>
</dbReference>
<dbReference type="GO" id="GO:0008270">
    <property type="term" value="F:zinc ion binding"/>
    <property type="evidence" value="ECO:0007669"/>
    <property type="project" value="UniProtKB-UniRule"/>
</dbReference>
<dbReference type="GO" id="GO:0006508">
    <property type="term" value="P:proteolysis"/>
    <property type="evidence" value="ECO:0007669"/>
    <property type="project" value="UniProtKB-KW"/>
</dbReference>
<dbReference type="CDD" id="cd20169">
    <property type="entry name" value="Peptidase_M90_mtfA"/>
    <property type="match status" value="1"/>
</dbReference>
<dbReference type="FunFam" id="1.10.472.150:FF:000001">
    <property type="entry name" value="Protein MtfA"/>
    <property type="match status" value="1"/>
</dbReference>
<dbReference type="FunFam" id="3.40.390.10:FF:000012">
    <property type="entry name" value="Protein MtfA"/>
    <property type="match status" value="1"/>
</dbReference>
<dbReference type="Gene3D" id="3.40.390.10">
    <property type="entry name" value="Collagenase (Catalytic Domain)"/>
    <property type="match status" value="1"/>
</dbReference>
<dbReference type="Gene3D" id="1.10.472.150">
    <property type="entry name" value="Glucose-regulated metallo-peptidase M90, N-terminal domain"/>
    <property type="match status" value="1"/>
</dbReference>
<dbReference type="HAMAP" id="MF_01593">
    <property type="entry name" value="MtfA"/>
    <property type="match status" value="1"/>
</dbReference>
<dbReference type="InterPro" id="IPR024079">
    <property type="entry name" value="MetalloPept_cat_dom_sf"/>
</dbReference>
<dbReference type="InterPro" id="IPR057256">
    <property type="entry name" value="MtfA_enterob"/>
</dbReference>
<dbReference type="InterPro" id="IPR010384">
    <property type="entry name" value="MtfA_fam"/>
</dbReference>
<dbReference type="InterPro" id="IPR042252">
    <property type="entry name" value="MtfA_N"/>
</dbReference>
<dbReference type="NCBIfam" id="NF011939">
    <property type="entry name" value="PRK15410.1"/>
    <property type="match status" value="1"/>
</dbReference>
<dbReference type="PANTHER" id="PTHR30164">
    <property type="entry name" value="MTFA PEPTIDASE"/>
    <property type="match status" value="1"/>
</dbReference>
<dbReference type="PANTHER" id="PTHR30164:SF2">
    <property type="entry name" value="PROTEIN MTFA"/>
    <property type="match status" value="1"/>
</dbReference>
<dbReference type="Pfam" id="PF06167">
    <property type="entry name" value="Peptidase_M90"/>
    <property type="match status" value="1"/>
</dbReference>
<dbReference type="SUPFAM" id="SSF55486">
    <property type="entry name" value="Metalloproteases ('zincins'), catalytic domain"/>
    <property type="match status" value="1"/>
</dbReference>
<gene>
    <name evidence="1" type="primary">mtfA</name>
    <name type="ordered locus">KPK_1844</name>
</gene>
<keyword id="KW-0031">Aminopeptidase</keyword>
<keyword id="KW-0963">Cytoplasm</keyword>
<keyword id="KW-0378">Hydrolase</keyword>
<keyword id="KW-0479">Metal-binding</keyword>
<keyword id="KW-0482">Metalloprotease</keyword>
<keyword id="KW-0645">Protease</keyword>
<keyword id="KW-0862">Zinc</keyword>
<name>MTFA_KLEP3</name>
<reference key="1">
    <citation type="journal article" date="2008" name="PLoS Genet.">
        <title>Complete genome sequence of the N2-fixing broad host range endophyte Klebsiella pneumoniae 342 and virulence predictions verified in mice.</title>
        <authorList>
            <person name="Fouts D.E."/>
            <person name="Tyler H.L."/>
            <person name="DeBoy R.T."/>
            <person name="Daugherty S."/>
            <person name="Ren Q."/>
            <person name="Badger J.H."/>
            <person name="Durkin A.S."/>
            <person name="Huot H."/>
            <person name="Shrivastava S."/>
            <person name="Kothari S."/>
            <person name="Dodson R.J."/>
            <person name="Mohamoud Y."/>
            <person name="Khouri H."/>
            <person name="Roesch L.F.W."/>
            <person name="Krogfelt K.A."/>
            <person name="Struve C."/>
            <person name="Triplett E.W."/>
            <person name="Methe B.A."/>
        </authorList>
    </citation>
    <scope>NUCLEOTIDE SEQUENCE [LARGE SCALE GENOMIC DNA]</scope>
    <source>
        <strain>342</strain>
    </source>
</reference>
<organism>
    <name type="scientific">Klebsiella pneumoniae (strain 342)</name>
    <dbReference type="NCBI Taxonomy" id="507522"/>
    <lineage>
        <taxon>Bacteria</taxon>
        <taxon>Pseudomonadati</taxon>
        <taxon>Pseudomonadota</taxon>
        <taxon>Gammaproteobacteria</taxon>
        <taxon>Enterobacterales</taxon>
        <taxon>Enterobacteriaceae</taxon>
        <taxon>Klebsiella/Raoultella group</taxon>
        <taxon>Klebsiella</taxon>
        <taxon>Klebsiella pneumoniae complex</taxon>
    </lineage>
</organism>
<evidence type="ECO:0000255" key="1">
    <source>
        <dbReference type="HAMAP-Rule" id="MF_01593"/>
    </source>
</evidence>
<comment type="function">
    <text evidence="1">Involved in the modulation of the activity of the glucose-phosphotransferase system (glucose-PTS). Interacts with the transcriptional repressor Mlc, preventing its interaction with DNA and leading to the modulation of expression of genes regulated by Mlc, including ptsG, which encodes the PTS system glucose-specific EIICB component.</text>
</comment>
<comment type="function">
    <text evidence="1">Shows zinc-dependent metallopeptidase activity.</text>
</comment>
<comment type="cofactor">
    <cofactor evidence="1">
        <name>Zn(2+)</name>
        <dbReference type="ChEBI" id="CHEBI:29105"/>
    </cofactor>
    <text evidence="1">Binds 1 zinc ion per subunit.</text>
</comment>
<comment type="subunit">
    <text evidence="1">Interacts with Mlc.</text>
</comment>
<comment type="subcellular location">
    <subcellularLocation>
        <location evidence="1">Cytoplasm</location>
    </subcellularLocation>
</comment>
<comment type="similarity">
    <text evidence="1">Belongs to the MtfA family.</text>
</comment>
<sequence length="265" mass="30183">MFKWPWKADDESGNAEMPWEQALAIPVLAHLSPTEQRKLTQLAARFLQQKRLVALQGLELTPLHQARIALLFCLPVLELGIEWLDGFHEVLIYPAPFVVDDEWEDDIGLVHNQRVVQSGQSWQQGPVVLNWLDIQDSFDASGFNLVVHEVAHKLDARNGDRASGVPLIPLREVAGWEHDLHAAMNNIQDEIDMVGESAASIDAYAATDPAECFAVLSEYFFSAPELFAPRFPALWQRFCHFYQQDPLQRIRENGLQDEDNRRIVH</sequence>